<gene>
    <name evidence="1" type="primary">pepQ</name>
    <name type="ordered locus">YpAngola_A1913</name>
</gene>
<proteinExistence type="inferred from homology"/>
<reference key="1">
    <citation type="journal article" date="2010" name="J. Bacteriol.">
        <title>Genome sequence of the deep-rooted Yersinia pestis strain Angola reveals new insights into the evolution and pangenome of the plague bacterium.</title>
        <authorList>
            <person name="Eppinger M."/>
            <person name="Worsham P.L."/>
            <person name="Nikolich M.P."/>
            <person name="Riley D.R."/>
            <person name="Sebastian Y."/>
            <person name="Mou S."/>
            <person name="Achtman M."/>
            <person name="Lindler L.E."/>
            <person name="Ravel J."/>
        </authorList>
    </citation>
    <scope>NUCLEOTIDE SEQUENCE [LARGE SCALE GENOMIC DNA]</scope>
    <source>
        <strain>Angola</strain>
    </source>
</reference>
<comment type="function">
    <text evidence="1">Splits dipeptides with a prolyl residue in the C-terminal position.</text>
</comment>
<comment type="catalytic activity">
    <reaction evidence="1">
        <text>Xaa-L-Pro dipeptide + H2O = an L-alpha-amino acid + L-proline</text>
        <dbReference type="Rhea" id="RHEA:76407"/>
        <dbReference type="ChEBI" id="CHEBI:15377"/>
        <dbReference type="ChEBI" id="CHEBI:59869"/>
        <dbReference type="ChEBI" id="CHEBI:60039"/>
        <dbReference type="ChEBI" id="CHEBI:195196"/>
        <dbReference type="EC" id="3.4.13.9"/>
    </reaction>
</comment>
<comment type="cofactor">
    <cofactor evidence="1">
        <name>Mn(2+)</name>
        <dbReference type="ChEBI" id="CHEBI:29035"/>
    </cofactor>
    <text evidence="1">Binds 2 manganese ions per subunit.</text>
</comment>
<comment type="similarity">
    <text evidence="1">Belongs to the peptidase M24B family. Bacterial-type prolidase subfamily.</text>
</comment>
<dbReference type="EC" id="3.4.13.9" evidence="1"/>
<dbReference type="EMBL" id="CP000901">
    <property type="protein sequence ID" value="ABX87477.1"/>
    <property type="molecule type" value="Genomic_DNA"/>
</dbReference>
<dbReference type="RefSeq" id="WP_002211547.1">
    <property type="nucleotide sequence ID" value="NZ_CP009935.1"/>
</dbReference>
<dbReference type="SMR" id="A9R755"/>
<dbReference type="MEROPS" id="M24.003"/>
<dbReference type="GeneID" id="57974943"/>
<dbReference type="KEGG" id="ypg:YpAngola_A1913"/>
<dbReference type="PATRIC" id="fig|349746.12.peg.2896"/>
<dbReference type="GO" id="GO:0005829">
    <property type="term" value="C:cytosol"/>
    <property type="evidence" value="ECO:0007669"/>
    <property type="project" value="TreeGrafter"/>
</dbReference>
<dbReference type="GO" id="GO:0004177">
    <property type="term" value="F:aminopeptidase activity"/>
    <property type="evidence" value="ECO:0007669"/>
    <property type="project" value="TreeGrafter"/>
</dbReference>
<dbReference type="GO" id="GO:0046872">
    <property type="term" value="F:metal ion binding"/>
    <property type="evidence" value="ECO:0007669"/>
    <property type="project" value="UniProtKB-KW"/>
</dbReference>
<dbReference type="GO" id="GO:0008235">
    <property type="term" value="F:metalloexopeptidase activity"/>
    <property type="evidence" value="ECO:0007669"/>
    <property type="project" value="UniProtKB-UniRule"/>
</dbReference>
<dbReference type="GO" id="GO:0016795">
    <property type="term" value="F:phosphoric triester hydrolase activity"/>
    <property type="evidence" value="ECO:0007669"/>
    <property type="project" value="InterPro"/>
</dbReference>
<dbReference type="GO" id="GO:0102009">
    <property type="term" value="F:proline dipeptidase activity"/>
    <property type="evidence" value="ECO:0007669"/>
    <property type="project" value="UniProtKB-EC"/>
</dbReference>
<dbReference type="GO" id="GO:0006508">
    <property type="term" value="P:proteolysis"/>
    <property type="evidence" value="ECO:0007669"/>
    <property type="project" value="UniProtKB-KW"/>
</dbReference>
<dbReference type="Gene3D" id="3.90.230.10">
    <property type="entry name" value="Creatinase/methionine aminopeptidase superfamily"/>
    <property type="match status" value="1"/>
</dbReference>
<dbReference type="Gene3D" id="3.40.350.10">
    <property type="entry name" value="Creatinase/prolidase N-terminal domain"/>
    <property type="match status" value="1"/>
</dbReference>
<dbReference type="HAMAP" id="MF_01279">
    <property type="entry name" value="X_Pro_dipeptid"/>
    <property type="match status" value="1"/>
</dbReference>
<dbReference type="InterPro" id="IPR029149">
    <property type="entry name" value="Creatin/AminoP/Spt16_N"/>
</dbReference>
<dbReference type="InterPro" id="IPR036005">
    <property type="entry name" value="Creatinase/aminopeptidase-like"/>
</dbReference>
<dbReference type="InterPro" id="IPR048819">
    <property type="entry name" value="PepQ_N"/>
</dbReference>
<dbReference type="InterPro" id="IPR000994">
    <property type="entry name" value="Pept_M24"/>
</dbReference>
<dbReference type="InterPro" id="IPR001131">
    <property type="entry name" value="Peptidase_M24B_aminopep-P_CS"/>
</dbReference>
<dbReference type="InterPro" id="IPR052433">
    <property type="entry name" value="X-Pro_dipept-like"/>
</dbReference>
<dbReference type="InterPro" id="IPR022846">
    <property type="entry name" value="X_Pro_dipept"/>
</dbReference>
<dbReference type="NCBIfam" id="NF010133">
    <property type="entry name" value="PRK13607.1"/>
    <property type="match status" value="1"/>
</dbReference>
<dbReference type="PANTHER" id="PTHR43226">
    <property type="entry name" value="XAA-PRO AMINOPEPTIDASE 3"/>
    <property type="match status" value="1"/>
</dbReference>
<dbReference type="PANTHER" id="PTHR43226:SF8">
    <property type="entry name" value="XAA-PRO DIPEPTIDASE"/>
    <property type="match status" value="1"/>
</dbReference>
<dbReference type="Pfam" id="PF21216">
    <property type="entry name" value="PepQ_N"/>
    <property type="match status" value="1"/>
</dbReference>
<dbReference type="Pfam" id="PF00557">
    <property type="entry name" value="Peptidase_M24"/>
    <property type="match status" value="1"/>
</dbReference>
<dbReference type="SUPFAM" id="SSF55920">
    <property type="entry name" value="Creatinase/aminopeptidase"/>
    <property type="match status" value="1"/>
</dbReference>
<dbReference type="PROSITE" id="PS00491">
    <property type="entry name" value="PROLINE_PEPTIDASE"/>
    <property type="match status" value="1"/>
</dbReference>
<protein>
    <recommendedName>
        <fullName evidence="1">Xaa-Pro dipeptidase</fullName>
        <shortName evidence="1">X-Pro dipeptidase</shortName>
        <ecNumber evidence="1">3.4.13.9</ecNumber>
    </recommendedName>
    <alternativeName>
        <fullName evidence="1">Imidodipeptidase</fullName>
    </alternativeName>
    <alternativeName>
        <fullName evidence="1">Proline dipeptidase</fullName>
        <shortName evidence="1">Prolidase</shortName>
    </alternativeName>
</protein>
<organism>
    <name type="scientific">Yersinia pestis bv. Antiqua (strain Angola)</name>
    <dbReference type="NCBI Taxonomy" id="349746"/>
    <lineage>
        <taxon>Bacteria</taxon>
        <taxon>Pseudomonadati</taxon>
        <taxon>Pseudomonadota</taxon>
        <taxon>Gammaproteobacteria</taxon>
        <taxon>Enterobacterales</taxon>
        <taxon>Yersiniaceae</taxon>
        <taxon>Yersinia</taxon>
    </lineage>
</organism>
<evidence type="ECO:0000255" key="1">
    <source>
        <dbReference type="HAMAP-Rule" id="MF_01279"/>
    </source>
</evidence>
<keyword id="KW-0224">Dipeptidase</keyword>
<keyword id="KW-0378">Hydrolase</keyword>
<keyword id="KW-0464">Manganese</keyword>
<keyword id="KW-0479">Metal-binding</keyword>
<keyword id="KW-0482">Metalloprotease</keyword>
<keyword id="KW-0645">Protease</keyword>
<feature type="chain" id="PRO_1000140338" description="Xaa-Pro dipeptidase">
    <location>
        <begin position="1"/>
        <end position="443"/>
    </location>
</feature>
<feature type="binding site" evidence="1">
    <location>
        <position position="246"/>
    </location>
    <ligand>
        <name>Mn(2+)</name>
        <dbReference type="ChEBI" id="CHEBI:29035"/>
        <label>2</label>
    </ligand>
</feature>
<feature type="binding site" evidence="1">
    <location>
        <position position="257"/>
    </location>
    <ligand>
        <name>Mn(2+)</name>
        <dbReference type="ChEBI" id="CHEBI:29035"/>
        <label>1</label>
    </ligand>
</feature>
<feature type="binding site" evidence="1">
    <location>
        <position position="257"/>
    </location>
    <ligand>
        <name>Mn(2+)</name>
        <dbReference type="ChEBI" id="CHEBI:29035"/>
        <label>2</label>
    </ligand>
</feature>
<feature type="binding site" evidence="1">
    <location>
        <position position="339"/>
    </location>
    <ligand>
        <name>Mn(2+)</name>
        <dbReference type="ChEBI" id="CHEBI:29035"/>
        <label>1</label>
    </ligand>
</feature>
<feature type="binding site" evidence="1">
    <location>
        <position position="384"/>
    </location>
    <ligand>
        <name>Mn(2+)</name>
        <dbReference type="ChEBI" id="CHEBI:29035"/>
        <label>1</label>
    </ligand>
</feature>
<feature type="binding site" evidence="1">
    <location>
        <position position="423"/>
    </location>
    <ligand>
        <name>Mn(2+)</name>
        <dbReference type="ChEBI" id="CHEBI:29035"/>
        <label>1</label>
    </ligand>
</feature>
<feature type="binding site" evidence="1">
    <location>
        <position position="423"/>
    </location>
    <ligand>
        <name>Mn(2+)</name>
        <dbReference type="ChEBI" id="CHEBI:29035"/>
        <label>2</label>
    </ligand>
</feature>
<sequence>METLASLYNEHLSTLQQRTRDVLERHQLDALLIHSGELQRLFLDDRDYPFKVNPQFKAWVPVTEVPNCWLWVDGVNTPKLWFYSPVDYWHSVEPLPDSFWTKNIDVQPLLNADDIAQQLPVQRERVAYIGYAQQRAQALGFSAENINPQPVLDYLHYYRSYKTDYELACMREAQKTAVVGHRAAYEAFQSGMSEFDINLAYLMATGHRDTDVPYDNIVALNEHSAVLHYTILQHQPPAEIRSFLIDAGAEYNGYAADLTRTYTADRDSDFAALISDLNTEQLALIDTIKSGERYTDYHVQMHQRIAKLLRTHNLVTGISEEAMVEQGITCPFLPHGLGHPLGLQVHDTAGFMQDDKGTNLNAPSKYPYLRCTRVLQPRMVLTIEPGLYFIDSLLAPWRIGEFSKHFNWDRIDALKPYGGIRIEDNIVIHDKRVENMTRDLKLA</sequence>
<accession>A9R755</accession>
<name>PEPQ_YERPG</name>